<protein>
    <recommendedName>
        <fullName evidence="1">ATP-dependent Clp protease ATP-binding subunit ClpX</fullName>
    </recommendedName>
</protein>
<keyword id="KW-0067">ATP-binding</keyword>
<keyword id="KW-0143">Chaperone</keyword>
<keyword id="KW-0479">Metal-binding</keyword>
<keyword id="KW-0547">Nucleotide-binding</keyword>
<keyword id="KW-1185">Reference proteome</keyword>
<keyword id="KW-0862">Zinc</keyword>
<sequence>MARIGDGGDLLKCSFCGKSQKQVKKLIAGPGVYICDECIDLCNEIIEEELAESGEVKWEELPKPMEICQFLDNYVVGQAQAKKALAVAVYNHYKRIQAEATGAPSADSVELAKSNILLLGPTGCGKTHLAQTLARMLNVPFAIADATALTEAGYVGEDVENILLKLIQAADYDIKRAETGIIYIDEVDKIARKSENPSITRDVSGEGVQQALLKMLEGTVANVPPQGGRKHPHQEFIQIDTTNVLFICGGAFAGLDQIIEARTGHGGTGFGARLRAVSERSTDDTFSQVMPEDMLKFGLIPEFIGRLPVITNVRSLDRPALVQILTEPRNALVRQYQRLFELDGVELEFEQSALEAIADQAMLRGTGARGLRAIMEEVLLSVMYEVPSNPDAARVLINREVVLENVNPTIVPREFTSRRSRREREEKSA</sequence>
<name>CLPX_SALTO</name>
<comment type="function">
    <text evidence="1">ATP-dependent specificity component of the Clp protease. It directs the protease to specific substrates. Can perform chaperone functions in the absence of ClpP.</text>
</comment>
<comment type="subunit">
    <text evidence="1">Component of the ClpX-ClpP complex. Forms a hexameric ring that, in the presence of ATP, binds to fourteen ClpP subunits assembled into a disk-like structure with a central cavity, resembling the structure of eukaryotic proteasomes.</text>
</comment>
<comment type="similarity">
    <text evidence="1">Belongs to the ClpX chaperone family.</text>
</comment>
<evidence type="ECO:0000255" key="1">
    <source>
        <dbReference type="HAMAP-Rule" id="MF_00175"/>
    </source>
</evidence>
<evidence type="ECO:0000255" key="2">
    <source>
        <dbReference type="PROSITE-ProRule" id="PRU01250"/>
    </source>
</evidence>
<dbReference type="EMBL" id="CP000667">
    <property type="protein sequence ID" value="ABP55928.1"/>
    <property type="molecule type" value="Genomic_DNA"/>
</dbReference>
<dbReference type="RefSeq" id="WP_012014703.1">
    <property type="nucleotide sequence ID" value="NC_009380.1"/>
</dbReference>
<dbReference type="SMR" id="A4XAH9"/>
<dbReference type="STRING" id="369723.Strop_3497"/>
<dbReference type="KEGG" id="stp:Strop_3497"/>
<dbReference type="PATRIC" id="fig|369723.5.peg.3611"/>
<dbReference type="eggNOG" id="COG1219">
    <property type="taxonomic scope" value="Bacteria"/>
</dbReference>
<dbReference type="HOGENOM" id="CLU_014218_8_2_11"/>
<dbReference type="Proteomes" id="UP000000235">
    <property type="component" value="Chromosome"/>
</dbReference>
<dbReference type="GO" id="GO:0009376">
    <property type="term" value="C:HslUV protease complex"/>
    <property type="evidence" value="ECO:0007669"/>
    <property type="project" value="TreeGrafter"/>
</dbReference>
<dbReference type="GO" id="GO:0005524">
    <property type="term" value="F:ATP binding"/>
    <property type="evidence" value="ECO:0007669"/>
    <property type="project" value="UniProtKB-UniRule"/>
</dbReference>
<dbReference type="GO" id="GO:0016887">
    <property type="term" value="F:ATP hydrolysis activity"/>
    <property type="evidence" value="ECO:0007669"/>
    <property type="project" value="InterPro"/>
</dbReference>
<dbReference type="GO" id="GO:0140662">
    <property type="term" value="F:ATP-dependent protein folding chaperone"/>
    <property type="evidence" value="ECO:0007669"/>
    <property type="project" value="InterPro"/>
</dbReference>
<dbReference type="GO" id="GO:0046983">
    <property type="term" value="F:protein dimerization activity"/>
    <property type="evidence" value="ECO:0007669"/>
    <property type="project" value="InterPro"/>
</dbReference>
<dbReference type="GO" id="GO:0051082">
    <property type="term" value="F:unfolded protein binding"/>
    <property type="evidence" value="ECO:0007669"/>
    <property type="project" value="UniProtKB-UniRule"/>
</dbReference>
<dbReference type="GO" id="GO:0008270">
    <property type="term" value="F:zinc ion binding"/>
    <property type="evidence" value="ECO:0007669"/>
    <property type="project" value="InterPro"/>
</dbReference>
<dbReference type="GO" id="GO:0051301">
    <property type="term" value="P:cell division"/>
    <property type="evidence" value="ECO:0007669"/>
    <property type="project" value="TreeGrafter"/>
</dbReference>
<dbReference type="GO" id="GO:0051603">
    <property type="term" value="P:proteolysis involved in protein catabolic process"/>
    <property type="evidence" value="ECO:0007669"/>
    <property type="project" value="TreeGrafter"/>
</dbReference>
<dbReference type="CDD" id="cd19497">
    <property type="entry name" value="RecA-like_ClpX"/>
    <property type="match status" value="1"/>
</dbReference>
<dbReference type="FunFam" id="1.10.8.60:FF:000002">
    <property type="entry name" value="ATP-dependent Clp protease ATP-binding subunit ClpX"/>
    <property type="match status" value="1"/>
</dbReference>
<dbReference type="FunFam" id="3.40.50.300:FF:000005">
    <property type="entry name" value="ATP-dependent Clp protease ATP-binding subunit ClpX"/>
    <property type="match status" value="1"/>
</dbReference>
<dbReference type="Gene3D" id="1.10.8.60">
    <property type="match status" value="1"/>
</dbReference>
<dbReference type="Gene3D" id="6.20.220.10">
    <property type="entry name" value="ClpX chaperone, C4-type zinc finger domain"/>
    <property type="match status" value="1"/>
</dbReference>
<dbReference type="Gene3D" id="3.40.50.300">
    <property type="entry name" value="P-loop containing nucleotide triphosphate hydrolases"/>
    <property type="match status" value="1"/>
</dbReference>
<dbReference type="HAMAP" id="MF_00175">
    <property type="entry name" value="ClpX"/>
    <property type="match status" value="1"/>
</dbReference>
<dbReference type="InterPro" id="IPR003593">
    <property type="entry name" value="AAA+_ATPase"/>
</dbReference>
<dbReference type="InterPro" id="IPR050052">
    <property type="entry name" value="ATP-dep_Clp_protease_ClpX"/>
</dbReference>
<dbReference type="InterPro" id="IPR003959">
    <property type="entry name" value="ATPase_AAA_core"/>
</dbReference>
<dbReference type="InterPro" id="IPR019489">
    <property type="entry name" value="Clp_ATPase_C"/>
</dbReference>
<dbReference type="InterPro" id="IPR004487">
    <property type="entry name" value="Clp_protease_ATP-bd_su_ClpX"/>
</dbReference>
<dbReference type="InterPro" id="IPR046425">
    <property type="entry name" value="ClpX_bact"/>
</dbReference>
<dbReference type="InterPro" id="IPR027417">
    <property type="entry name" value="P-loop_NTPase"/>
</dbReference>
<dbReference type="InterPro" id="IPR010603">
    <property type="entry name" value="Znf_CppX_C4"/>
</dbReference>
<dbReference type="InterPro" id="IPR038366">
    <property type="entry name" value="Znf_CppX_C4_sf"/>
</dbReference>
<dbReference type="NCBIfam" id="TIGR00382">
    <property type="entry name" value="clpX"/>
    <property type="match status" value="1"/>
</dbReference>
<dbReference type="NCBIfam" id="NF003745">
    <property type="entry name" value="PRK05342.1"/>
    <property type="match status" value="1"/>
</dbReference>
<dbReference type="PANTHER" id="PTHR48102:SF7">
    <property type="entry name" value="ATP-DEPENDENT CLP PROTEASE ATP-BINDING SUBUNIT CLPX-LIKE, MITOCHONDRIAL"/>
    <property type="match status" value="1"/>
</dbReference>
<dbReference type="PANTHER" id="PTHR48102">
    <property type="entry name" value="ATP-DEPENDENT CLP PROTEASE ATP-BINDING SUBUNIT CLPX-LIKE, MITOCHONDRIAL-RELATED"/>
    <property type="match status" value="1"/>
</dbReference>
<dbReference type="Pfam" id="PF07724">
    <property type="entry name" value="AAA_2"/>
    <property type="match status" value="1"/>
</dbReference>
<dbReference type="Pfam" id="PF10431">
    <property type="entry name" value="ClpB_D2-small"/>
    <property type="match status" value="1"/>
</dbReference>
<dbReference type="Pfam" id="PF06689">
    <property type="entry name" value="zf-C4_ClpX"/>
    <property type="match status" value="1"/>
</dbReference>
<dbReference type="SMART" id="SM00382">
    <property type="entry name" value="AAA"/>
    <property type="match status" value="1"/>
</dbReference>
<dbReference type="SMART" id="SM01086">
    <property type="entry name" value="ClpB_D2-small"/>
    <property type="match status" value="1"/>
</dbReference>
<dbReference type="SMART" id="SM00994">
    <property type="entry name" value="zf-C4_ClpX"/>
    <property type="match status" value="1"/>
</dbReference>
<dbReference type="SUPFAM" id="SSF57716">
    <property type="entry name" value="Glucocorticoid receptor-like (DNA-binding domain)"/>
    <property type="match status" value="1"/>
</dbReference>
<dbReference type="SUPFAM" id="SSF52540">
    <property type="entry name" value="P-loop containing nucleoside triphosphate hydrolases"/>
    <property type="match status" value="1"/>
</dbReference>
<dbReference type="PROSITE" id="PS51902">
    <property type="entry name" value="CLPX_ZB"/>
    <property type="match status" value="1"/>
</dbReference>
<gene>
    <name evidence="1" type="primary">clpX</name>
    <name type="ordered locus">Strop_3497</name>
</gene>
<organism>
    <name type="scientific">Salinispora tropica (strain ATCC BAA-916 / DSM 44818 / JCM 13857 / NBRC 105044 / CNB-440)</name>
    <dbReference type="NCBI Taxonomy" id="369723"/>
    <lineage>
        <taxon>Bacteria</taxon>
        <taxon>Bacillati</taxon>
        <taxon>Actinomycetota</taxon>
        <taxon>Actinomycetes</taxon>
        <taxon>Micromonosporales</taxon>
        <taxon>Micromonosporaceae</taxon>
        <taxon>Salinispora</taxon>
    </lineage>
</organism>
<proteinExistence type="inferred from homology"/>
<feature type="chain" id="PRO_1000077174" description="ATP-dependent Clp protease ATP-binding subunit ClpX">
    <location>
        <begin position="1"/>
        <end position="429"/>
    </location>
</feature>
<feature type="domain" description="ClpX-type ZB" evidence="2">
    <location>
        <begin position="1"/>
        <end position="54"/>
    </location>
</feature>
<feature type="binding site" evidence="2">
    <location>
        <position position="13"/>
    </location>
    <ligand>
        <name>Zn(2+)</name>
        <dbReference type="ChEBI" id="CHEBI:29105"/>
    </ligand>
</feature>
<feature type="binding site" evidence="2">
    <location>
        <position position="16"/>
    </location>
    <ligand>
        <name>Zn(2+)</name>
        <dbReference type="ChEBI" id="CHEBI:29105"/>
    </ligand>
</feature>
<feature type="binding site" evidence="2">
    <location>
        <position position="35"/>
    </location>
    <ligand>
        <name>Zn(2+)</name>
        <dbReference type="ChEBI" id="CHEBI:29105"/>
    </ligand>
</feature>
<feature type="binding site" evidence="2">
    <location>
        <position position="38"/>
    </location>
    <ligand>
        <name>Zn(2+)</name>
        <dbReference type="ChEBI" id="CHEBI:29105"/>
    </ligand>
</feature>
<reference key="1">
    <citation type="journal article" date="2007" name="Proc. Natl. Acad. Sci. U.S.A.">
        <title>Genome sequencing reveals complex secondary metabolome in the marine actinomycete Salinispora tropica.</title>
        <authorList>
            <person name="Udwary D.W."/>
            <person name="Zeigler L."/>
            <person name="Asolkar R.N."/>
            <person name="Singan V."/>
            <person name="Lapidus A."/>
            <person name="Fenical W."/>
            <person name="Jensen P.R."/>
            <person name="Moore B.S."/>
        </authorList>
    </citation>
    <scope>NUCLEOTIDE SEQUENCE [LARGE SCALE GENOMIC DNA]</scope>
    <source>
        <strain>ATCC BAA-916 / DSM 44818 / JCM 13857 / NBRC 105044 / CNB-440</strain>
    </source>
</reference>
<accession>A4XAH9</accession>